<comment type="function">
    <text evidence="1">With S4 and S5 plays an important role in translational accuracy. Located at the interface of the 30S and 50S subunits (By similarity).</text>
</comment>
<comment type="subunit">
    <text evidence="1">Part of the 30S ribosomal subunit.</text>
</comment>
<comment type="subcellular location">
    <subcellularLocation>
        <location>Plastid</location>
        <location>Chloroplast</location>
    </subcellularLocation>
</comment>
<comment type="similarity">
    <text evidence="3">Belongs to the universal ribosomal protein uS12 family.</text>
</comment>
<comment type="sequence caution" evidence="3">
    <conflict type="erroneous gene model prediction">
        <sequence resource="EMBL-CDS" id="AAZ94707"/>
    </conflict>
</comment>
<comment type="sequence caution" evidence="3">
    <conflict type="erroneous gene model prediction">
        <sequence resource="EMBL-CDS" id="ABI97472"/>
    </conflict>
</comment>
<comment type="sequence caution" evidence="3">
    <conflict type="erroneous gene model prediction">
        <sequence resource="EMBL-CDS" id="ABI97480"/>
    </conflict>
</comment>
<comment type="sequence caution" evidence="3">
    <conflict type="erroneous gene model prediction">
        <sequence resource="EMBL-CDS" id="ABI98769"/>
    </conflict>
</comment>
<comment type="sequence caution" evidence="3">
    <conflict type="erroneous gene model prediction">
        <sequence resource="EMBL-CDS" id="ABI98803"/>
    </conflict>
</comment>
<evidence type="ECO:0000250" key="1"/>
<evidence type="ECO:0000255" key="2">
    <source>
        <dbReference type="HAMAP-Rule" id="MF_00403"/>
    </source>
</evidence>
<evidence type="ECO:0000305" key="3"/>
<gene>
    <name type="primary">rps12-A</name>
    <name type="ordered locus">CsCp066</name>
</gene>
<gene>
    <name type="primary">rps12-B</name>
</gene>
<name>RR12_CUCSA</name>
<dbReference type="EMBL" id="DQ119058">
    <property type="protein sequence ID" value="AAZ94707.1"/>
    <property type="status" value="ALT_SEQ"/>
    <property type="molecule type" value="Genomic_DNA"/>
</dbReference>
<dbReference type="EMBL" id="AJ970307">
    <property type="protein sequence ID" value="CAJ00782.1"/>
    <property type="molecule type" value="Genomic_DNA"/>
</dbReference>
<dbReference type="EMBL" id="AJ970307">
    <property type="protein sequence ID" value="CAJ00783.1"/>
    <property type="molecule type" value="Genomic_DNA"/>
</dbReference>
<dbReference type="EMBL" id="DQ865975">
    <property type="protein sequence ID" value="ABI97472.1"/>
    <property type="status" value="ALT_SEQ"/>
    <property type="molecule type" value="Genomic_DNA"/>
</dbReference>
<dbReference type="EMBL" id="DQ865975">
    <property type="protein sequence ID" value="ABI97480.1"/>
    <property type="status" value="ALT_SEQ"/>
    <property type="molecule type" value="Genomic_DNA"/>
</dbReference>
<dbReference type="EMBL" id="DQ865976">
    <property type="protein sequence ID" value="ABI98769.1"/>
    <property type="status" value="ALT_SEQ"/>
    <property type="molecule type" value="Genomic_DNA"/>
</dbReference>
<dbReference type="EMBL" id="DQ865976">
    <property type="protein sequence ID" value="ABI98803.1"/>
    <property type="status" value="ALT_SEQ"/>
    <property type="molecule type" value="Genomic_DNA"/>
</dbReference>
<dbReference type="SMR" id="Q4VZJ2"/>
<dbReference type="KEGG" id="csv:3429306"/>
<dbReference type="KEGG" id="csv:3429307"/>
<dbReference type="eggNOG" id="KOG1750">
    <property type="taxonomic scope" value="Eukaryota"/>
</dbReference>
<dbReference type="OrthoDB" id="414309at2759"/>
<dbReference type="GO" id="GO:0009507">
    <property type="term" value="C:chloroplast"/>
    <property type="evidence" value="ECO:0007669"/>
    <property type="project" value="UniProtKB-SubCell"/>
</dbReference>
<dbReference type="GO" id="GO:0015935">
    <property type="term" value="C:small ribosomal subunit"/>
    <property type="evidence" value="ECO:0007669"/>
    <property type="project" value="InterPro"/>
</dbReference>
<dbReference type="GO" id="GO:0019843">
    <property type="term" value="F:rRNA binding"/>
    <property type="evidence" value="ECO:0007669"/>
    <property type="project" value="UniProtKB-UniRule"/>
</dbReference>
<dbReference type="GO" id="GO:0003735">
    <property type="term" value="F:structural constituent of ribosome"/>
    <property type="evidence" value="ECO:0007669"/>
    <property type="project" value="InterPro"/>
</dbReference>
<dbReference type="GO" id="GO:0006412">
    <property type="term" value="P:translation"/>
    <property type="evidence" value="ECO:0007669"/>
    <property type="project" value="UniProtKB-UniRule"/>
</dbReference>
<dbReference type="CDD" id="cd03368">
    <property type="entry name" value="Ribosomal_S12"/>
    <property type="match status" value="1"/>
</dbReference>
<dbReference type="FunFam" id="2.40.50.140:FF:000008">
    <property type="entry name" value="30S ribosomal protein S12, chloroplastic"/>
    <property type="match status" value="1"/>
</dbReference>
<dbReference type="Gene3D" id="2.40.50.140">
    <property type="entry name" value="Nucleic acid-binding proteins"/>
    <property type="match status" value="1"/>
</dbReference>
<dbReference type="HAMAP" id="MF_00403_B">
    <property type="entry name" value="Ribosomal_uS12_B"/>
    <property type="match status" value="1"/>
</dbReference>
<dbReference type="InterPro" id="IPR012340">
    <property type="entry name" value="NA-bd_OB-fold"/>
</dbReference>
<dbReference type="InterPro" id="IPR006032">
    <property type="entry name" value="Ribosomal_uS12"/>
</dbReference>
<dbReference type="InterPro" id="IPR005679">
    <property type="entry name" value="Ribosomal_uS12_bac"/>
</dbReference>
<dbReference type="NCBIfam" id="TIGR00981">
    <property type="entry name" value="rpsL_bact"/>
    <property type="match status" value="1"/>
</dbReference>
<dbReference type="PANTHER" id="PTHR11652">
    <property type="entry name" value="30S RIBOSOMAL PROTEIN S12 FAMILY MEMBER"/>
    <property type="match status" value="1"/>
</dbReference>
<dbReference type="Pfam" id="PF00164">
    <property type="entry name" value="Ribosom_S12_S23"/>
    <property type="match status" value="1"/>
</dbReference>
<dbReference type="PIRSF" id="PIRSF002133">
    <property type="entry name" value="Ribosomal_S12/S23"/>
    <property type="match status" value="1"/>
</dbReference>
<dbReference type="PRINTS" id="PR01034">
    <property type="entry name" value="RIBOSOMALS12"/>
</dbReference>
<dbReference type="SUPFAM" id="SSF50249">
    <property type="entry name" value="Nucleic acid-binding proteins"/>
    <property type="match status" value="1"/>
</dbReference>
<dbReference type="PROSITE" id="PS00055">
    <property type="entry name" value="RIBOSOMAL_S12"/>
    <property type="match status" value="1"/>
</dbReference>
<geneLocation type="chloroplast"/>
<sequence>MPTIKQLIRNTRQPIRNVTKSPALRGCPQRRGTCTRVYTITPKKPNSALRKVARVRLTSGFEITAYIPGIGHNLQEHSVVLVRGGRVKDLPGVRYHIVRGTLDAVGVKDRQQGRSKYGVKKPK</sequence>
<keyword id="KW-0150">Chloroplast</keyword>
<keyword id="KW-0934">Plastid</keyword>
<keyword id="KW-0687">Ribonucleoprotein</keyword>
<keyword id="KW-0689">Ribosomal protein</keyword>
<keyword id="KW-0694">RNA-binding</keyword>
<keyword id="KW-0699">rRNA-binding</keyword>
<organism>
    <name type="scientific">Cucumis sativus</name>
    <name type="common">Cucumber</name>
    <dbReference type="NCBI Taxonomy" id="3659"/>
    <lineage>
        <taxon>Eukaryota</taxon>
        <taxon>Viridiplantae</taxon>
        <taxon>Streptophyta</taxon>
        <taxon>Embryophyta</taxon>
        <taxon>Tracheophyta</taxon>
        <taxon>Spermatophyta</taxon>
        <taxon>Magnoliopsida</taxon>
        <taxon>eudicotyledons</taxon>
        <taxon>Gunneridae</taxon>
        <taxon>Pentapetalae</taxon>
        <taxon>rosids</taxon>
        <taxon>fabids</taxon>
        <taxon>Cucurbitales</taxon>
        <taxon>Cucurbitaceae</taxon>
        <taxon>Benincaseae</taxon>
        <taxon>Cucumis</taxon>
    </lineage>
</organism>
<protein>
    <recommendedName>
        <fullName evidence="2">Small ribosomal subunit protein uS12cz/uS12cy</fullName>
    </recommendedName>
    <alternativeName>
        <fullName evidence="3">30S ribosomal protein S12, chloroplastic</fullName>
    </alternativeName>
</protein>
<proteinExistence type="inferred from homology"/>
<reference key="1">
    <citation type="journal article" date="2006" name="Plant Cell Rep.">
        <title>Complete sequence and organization of the cucumber (Cucumis sativus L. cv. Baekmibaekdadagi) chloroplast genome.</title>
        <authorList>
            <person name="Kim J.-S."/>
            <person name="Jung J.D."/>
            <person name="Lee J.-A."/>
            <person name="Park H.-W."/>
            <person name="Oh K.-H."/>
            <person name="Jeong W.J."/>
            <person name="Choi D.-W."/>
            <person name="Liu J.R."/>
            <person name="Cho K.Y."/>
        </authorList>
    </citation>
    <scope>NUCLEOTIDE SEQUENCE [LARGE SCALE GENOMIC DNA]</scope>
    <source>
        <strain>cv. Baekmibaekdadagi</strain>
    </source>
</reference>
<reference key="2">
    <citation type="journal article" date="2007" name="Cell. Mol. Biol. Lett.">
        <title>The complete structure of the cucumber (Cucumis sativus L.) chloroplast genome: its composition and comparative analysis.</title>
        <authorList>
            <person name="Plader W.W."/>
            <person name="Yukawa Y."/>
            <person name="Sugiura M."/>
            <person name="Malepszy S."/>
        </authorList>
    </citation>
    <scope>NUCLEOTIDE SEQUENCE [LARGE SCALE GENOMIC DNA]</scope>
    <source>
        <strain>cv. Borszczagowski</strain>
    </source>
</reference>
<reference key="3">
    <citation type="journal article" date="2007" name="Genome">
        <title>Sequencing cucumber (Cucumis sativus L.) chloroplast genomes identifies differences between chilling-tolerant and -susceptible cucumber lines.</title>
        <authorList>
            <person name="Chung S.-M."/>
            <person name="Gordon V.S."/>
            <person name="Staub J.E."/>
        </authorList>
    </citation>
    <scope>NUCLEOTIDE SEQUENCE [LARGE SCALE GENOMIC DNA] OF 1-115</scope>
    <source>
        <strain>cv. Chipper</strain>
        <strain>cv. Gy14</strain>
    </source>
</reference>
<accession>Q4VZJ2</accession>
<accession>A5J1R4</accession>
<accession>Q2QD65</accession>
<feature type="chain" id="PRO_0000276608" description="Small ribosomal subunit protein uS12cz/uS12cy">
    <location>
        <begin position="1"/>
        <end position="123"/>
    </location>
</feature>